<organism>
    <name type="scientific">Granulibacter bethesdensis (strain ATCC BAA-1260 / CGDNIH1)</name>
    <dbReference type="NCBI Taxonomy" id="391165"/>
    <lineage>
        <taxon>Bacteria</taxon>
        <taxon>Pseudomonadati</taxon>
        <taxon>Pseudomonadota</taxon>
        <taxon>Alphaproteobacteria</taxon>
        <taxon>Acetobacterales</taxon>
        <taxon>Acetobacteraceae</taxon>
        <taxon>Granulibacter</taxon>
    </lineage>
</organism>
<reference key="1">
    <citation type="journal article" date="2007" name="J. Bacteriol.">
        <title>Genome sequence analysis of the emerging human pathogenic acetic acid bacterium Granulibacter bethesdensis.</title>
        <authorList>
            <person name="Greenberg D.E."/>
            <person name="Porcella S.F."/>
            <person name="Zelazny A.M."/>
            <person name="Virtaneva K."/>
            <person name="Sturdevant D.E."/>
            <person name="Kupko J.J. III"/>
            <person name="Barbian K.D."/>
            <person name="Babar A."/>
            <person name="Dorward D.W."/>
            <person name="Holland S.M."/>
        </authorList>
    </citation>
    <scope>NUCLEOTIDE SEQUENCE [LARGE SCALE GENOMIC DNA]</scope>
    <source>
        <strain>ATCC BAA-1260 / CGDNIH1</strain>
    </source>
</reference>
<gene>
    <name evidence="1" type="primary">smpB</name>
    <name type="ordered locus">GbCGDNIH1_1196</name>
</gene>
<protein>
    <recommendedName>
        <fullName evidence="1">SsrA-binding protein</fullName>
    </recommendedName>
    <alternativeName>
        <fullName evidence="1">Small protein B</fullName>
    </alternativeName>
</protein>
<keyword id="KW-0963">Cytoplasm</keyword>
<keyword id="KW-1185">Reference proteome</keyword>
<keyword id="KW-0694">RNA-binding</keyword>
<feature type="chain" id="PRO_0000331051" description="SsrA-binding protein">
    <location>
        <begin position="1"/>
        <end position="162"/>
    </location>
</feature>
<dbReference type="EMBL" id="CP000394">
    <property type="protein sequence ID" value="ABI62094.1"/>
    <property type="molecule type" value="Genomic_DNA"/>
</dbReference>
<dbReference type="RefSeq" id="WP_011631903.1">
    <property type="nucleotide sequence ID" value="NC_008343.2"/>
</dbReference>
<dbReference type="SMR" id="Q0BSV8"/>
<dbReference type="STRING" id="391165.GbCGDNIH1_1196"/>
<dbReference type="KEGG" id="gbe:GbCGDNIH1_1196"/>
<dbReference type="eggNOG" id="COG0691">
    <property type="taxonomic scope" value="Bacteria"/>
</dbReference>
<dbReference type="HOGENOM" id="CLU_108953_0_1_5"/>
<dbReference type="OrthoDB" id="9805462at2"/>
<dbReference type="Proteomes" id="UP000001963">
    <property type="component" value="Chromosome"/>
</dbReference>
<dbReference type="GO" id="GO:0005829">
    <property type="term" value="C:cytosol"/>
    <property type="evidence" value="ECO:0007669"/>
    <property type="project" value="TreeGrafter"/>
</dbReference>
<dbReference type="GO" id="GO:0003723">
    <property type="term" value="F:RNA binding"/>
    <property type="evidence" value="ECO:0007669"/>
    <property type="project" value="UniProtKB-UniRule"/>
</dbReference>
<dbReference type="GO" id="GO:0070929">
    <property type="term" value="P:trans-translation"/>
    <property type="evidence" value="ECO:0007669"/>
    <property type="project" value="UniProtKB-UniRule"/>
</dbReference>
<dbReference type="CDD" id="cd09294">
    <property type="entry name" value="SmpB"/>
    <property type="match status" value="1"/>
</dbReference>
<dbReference type="Gene3D" id="2.40.280.10">
    <property type="match status" value="1"/>
</dbReference>
<dbReference type="HAMAP" id="MF_00023">
    <property type="entry name" value="SmpB"/>
    <property type="match status" value="1"/>
</dbReference>
<dbReference type="InterPro" id="IPR023620">
    <property type="entry name" value="SmpB"/>
</dbReference>
<dbReference type="InterPro" id="IPR000037">
    <property type="entry name" value="SsrA-bd_prot"/>
</dbReference>
<dbReference type="InterPro" id="IPR020081">
    <property type="entry name" value="SsrA-bd_prot_CS"/>
</dbReference>
<dbReference type="NCBIfam" id="NF003843">
    <property type="entry name" value="PRK05422.1"/>
    <property type="match status" value="1"/>
</dbReference>
<dbReference type="NCBIfam" id="TIGR00086">
    <property type="entry name" value="smpB"/>
    <property type="match status" value="1"/>
</dbReference>
<dbReference type="PANTHER" id="PTHR30308:SF2">
    <property type="entry name" value="SSRA-BINDING PROTEIN"/>
    <property type="match status" value="1"/>
</dbReference>
<dbReference type="PANTHER" id="PTHR30308">
    <property type="entry name" value="TMRNA-BINDING COMPONENT OF TRANS-TRANSLATION TAGGING COMPLEX"/>
    <property type="match status" value="1"/>
</dbReference>
<dbReference type="Pfam" id="PF01668">
    <property type="entry name" value="SmpB"/>
    <property type="match status" value="1"/>
</dbReference>
<dbReference type="SUPFAM" id="SSF74982">
    <property type="entry name" value="Small protein B (SmpB)"/>
    <property type="match status" value="1"/>
</dbReference>
<dbReference type="PROSITE" id="PS01317">
    <property type="entry name" value="SSRP"/>
    <property type="match status" value="1"/>
</dbReference>
<evidence type="ECO:0000255" key="1">
    <source>
        <dbReference type="HAMAP-Rule" id="MF_00023"/>
    </source>
</evidence>
<name>SSRP_GRABC</name>
<comment type="function">
    <text evidence="1">Required for rescue of stalled ribosomes mediated by trans-translation. Binds to transfer-messenger RNA (tmRNA), required for stable association of tmRNA with ribosomes. tmRNA and SmpB together mimic tRNA shape, replacing the anticodon stem-loop with SmpB. tmRNA is encoded by the ssrA gene; the 2 termini fold to resemble tRNA(Ala) and it encodes a 'tag peptide', a short internal open reading frame. During trans-translation Ala-aminoacylated tmRNA acts like a tRNA, entering the A-site of stalled ribosomes, displacing the stalled mRNA. The ribosome then switches to translate the ORF on the tmRNA; the nascent peptide is terminated with the 'tag peptide' encoded by the tmRNA and targeted for degradation. The ribosome is freed to recommence translation, which seems to be the essential function of trans-translation.</text>
</comment>
<comment type="subcellular location">
    <subcellularLocation>
        <location evidence="1">Cytoplasm</location>
    </subcellularLocation>
    <text evidence="1">The tmRNA-SmpB complex associates with stalled 70S ribosomes.</text>
</comment>
<comment type="similarity">
    <text evidence="1">Belongs to the SmpB family.</text>
</comment>
<sequence>MAETKSGKSGLISHGVAAQNRKARFDYTIKETVEAGLVLKGPEVKSLRHGRATLSEAWAGERDGEMFLFNAYIPEYQGGVLSRFEPRSPRKLLLKRKQINHLLGAVQKQGQTVVPLQIHFNERGMAKVLLGVAEGRNKADKRAAIASRDWQRDKARLMREKG</sequence>
<accession>Q0BSV8</accession>
<proteinExistence type="inferred from homology"/>